<protein>
    <recommendedName>
        <fullName evidence="1">Large ribosomal subunit protein bL31</fullName>
    </recommendedName>
    <alternativeName>
        <fullName evidence="2">50S ribosomal protein L31</fullName>
    </alternativeName>
</protein>
<gene>
    <name evidence="1" type="primary">rpmE</name>
    <name type="ordered locus">BAB1_1728</name>
</gene>
<keyword id="KW-1185">Reference proteome</keyword>
<keyword id="KW-0687">Ribonucleoprotein</keyword>
<keyword id="KW-0689">Ribosomal protein</keyword>
<keyword id="KW-0694">RNA-binding</keyword>
<keyword id="KW-0699">rRNA-binding</keyword>
<name>RL31_BRUA2</name>
<comment type="function">
    <text evidence="1">Binds the 23S rRNA.</text>
</comment>
<comment type="subunit">
    <text evidence="1">Part of the 50S ribosomal subunit.</text>
</comment>
<comment type="similarity">
    <text evidence="1">Belongs to the bacterial ribosomal protein bL31 family. Type A subfamily.</text>
</comment>
<feature type="chain" id="PRO_0000259171" description="Large ribosomal subunit protein bL31">
    <location>
        <begin position="1"/>
        <end position="73"/>
    </location>
</feature>
<sequence>MKANIHPDYHTIKVVMTDGTEYMTRSTWGKEGDTMNLDIDPTTHPAWTGGSQTLLDRGGRVTKFKNRFGNLGI</sequence>
<reference key="1">
    <citation type="journal article" date="2005" name="Infect. Immun.">
        <title>Whole-genome analyses of speciation events in pathogenic Brucellae.</title>
        <authorList>
            <person name="Chain P.S."/>
            <person name="Comerci D.J."/>
            <person name="Tolmasky M.E."/>
            <person name="Larimer F.W."/>
            <person name="Malfatti S.A."/>
            <person name="Vergez L.M."/>
            <person name="Aguero F."/>
            <person name="Land M.L."/>
            <person name="Ugalde R.A."/>
            <person name="Garcia E."/>
        </authorList>
    </citation>
    <scope>NUCLEOTIDE SEQUENCE [LARGE SCALE GENOMIC DNA]</scope>
    <source>
        <strain>2308</strain>
    </source>
</reference>
<accession>Q2YRF3</accession>
<proteinExistence type="inferred from homology"/>
<evidence type="ECO:0000255" key="1">
    <source>
        <dbReference type="HAMAP-Rule" id="MF_00501"/>
    </source>
</evidence>
<evidence type="ECO:0000305" key="2"/>
<organism>
    <name type="scientific">Brucella abortus (strain 2308)</name>
    <dbReference type="NCBI Taxonomy" id="359391"/>
    <lineage>
        <taxon>Bacteria</taxon>
        <taxon>Pseudomonadati</taxon>
        <taxon>Pseudomonadota</taxon>
        <taxon>Alphaproteobacteria</taxon>
        <taxon>Hyphomicrobiales</taxon>
        <taxon>Brucellaceae</taxon>
        <taxon>Brucella/Ochrobactrum group</taxon>
        <taxon>Brucella</taxon>
    </lineage>
</organism>
<dbReference type="EMBL" id="AM040264">
    <property type="protein sequence ID" value="CAJ11684.1"/>
    <property type="molecule type" value="Genomic_DNA"/>
</dbReference>
<dbReference type="RefSeq" id="WP_002964804.1">
    <property type="nucleotide sequence ID" value="NZ_KN046823.1"/>
</dbReference>
<dbReference type="SMR" id="Q2YRF3"/>
<dbReference type="STRING" id="359391.BAB1_1728"/>
<dbReference type="GeneID" id="97533132"/>
<dbReference type="KEGG" id="bmf:BAB1_1728"/>
<dbReference type="PATRIC" id="fig|359391.11.peg.241"/>
<dbReference type="HOGENOM" id="CLU_114306_3_2_5"/>
<dbReference type="Proteomes" id="UP000002719">
    <property type="component" value="Chromosome I"/>
</dbReference>
<dbReference type="GO" id="GO:1990904">
    <property type="term" value="C:ribonucleoprotein complex"/>
    <property type="evidence" value="ECO:0007669"/>
    <property type="project" value="UniProtKB-KW"/>
</dbReference>
<dbReference type="GO" id="GO:0005840">
    <property type="term" value="C:ribosome"/>
    <property type="evidence" value="ECO:0007669"/>
    <property type="project" value="UniProtKB-KW"/>
</dbReference>
<dbReference type="GO" id="GO:0019843">
    <property type="term" value="F:rRNA binding"/>
    <property type="evidence" value="ECO:0007669"/>
    <property type="project" value="UniProtKB-KW"/>
</dbReference>
<dbReference type="GO" id="GO:0003735">
    <property type="term" value="F:structural constituent of ribosome"/>
    <property type="evidence" value="ECO:0007669"/>
    <property type="project" value="InterPro"/>
</dbReference>
<dbReference type="GO" id="GO:0006412">
    <property type="term" value="P:translation"/>
    <property type="evidence" value="ECO:0007669"/>
    <property type="project" value="UniProtKB-UniRule"/>
</dbReference>
<dbReference type="Gene3D" id="4.10.830.30">
    <property type="entry name" value="Ribosomal protein L31"/>
    <property type="match status" value="1"/>
</dbReference>
<dbReference type="HAMAP" id="MF_00501">
    <property type="entry name" value="Ribosomal_bL31_1"/>
    <property type="match status" value="1"/>
</dbReference>
<dbReference type="InterPro" id="IPR034704">
    <property type="entry name" value="Ribosomal_bL28/bL31-like_sf"/>
</dbReference>
<dbReference type="InterPro" id="IPR002150">
    <property type="entry name" value="Ribosomal_bL31"/>
</dbReference>
<dbReference type="InterPro" id="IPR027491">
    <property type="entry name" value="Ribosomal_bL31_A"/>
</dbReference>
<dbReference type="InterPro" id="IPR042105">
    <property type="entry name" value="Ribosomal_bL31_sf"/>
</dbReference>
<dbReference type="NCBIfam" id="TIGR00105">
    <property type="entry name" value="L31"/>
    <property type="match status" value="1"/>
</dbReference>
<dbReference type="NCBIfam" id="NF001809">
    <property type="entry name" value="PRK00528.1"/>
    <property type="match status" value="1"/>
</dbReference>
<dbReference type="PANTHER" id="PTHR33280">
    <property type="entry name" value="50S RIBOSOMAL PROTEIN L31, CHLOROPLASTIC"/>
    <property type="match status" value="1"/>
</dbReference>
<dbReference type="PANTHER" id="PTHR33280:SF6">
    <property type="entry name" value="LARGE RIBOSOMAL SUBUNIT PROTEIN BL31A"/>
    <property type="match status" value="1"/>
</dbReference>
<dbReference type="Pfam" id="PF01197">
    <property type="entry name" value="Ribosomal_L31"/>
    <property type="match status" value="1"/>
</dbReference>
<dbReference type="PRINTS" id="PR01249">
    <property type="entry name" value="RIBOSOMALL31"/>
</dbReference>
<dbReference type="SUPFAM" id="SSF143800">
    <property type="entry name" value="L28p-like"/>
    <property type="match status" value="1"/>
</dbReference>
<dbReference type="PROSITE" id="PS01143">
    <property type="entry name" value="RIBOSOMAL_L31"/>
    <property type="match status" value="1"/>
</dbReference>